<organism>
    <name type="scientific">Burkholderia mallei (strain NCTC 10247)</name>
    <dbReference type="NCBI Taxonomy" id="320389"/>
    <lineage>
        <taxon>Bacteria</taxon>
        <taxon>Pseudomonadati</taxon>
        <taxon>Pseudomonadota</taxon>
        <taxon>Betaproteobacteria</taxon>
        <taxon>Burkholderiales</taxon>
        <taxon>Burkholderiaceae</taxon>
        <taxon>Burkholderia</taxon>
        <taxon>pseudomallei group</taxon>
    </lineage>
</organism>
<name>ARGB_BURM7</name>
<comment type="function">
    <text evidence="1">Catalyzes the ATP-dependent phosphorylation of N-acetyl-L-glutamate.</text>
</comment>
<comment type="catalytic activity">
    <reaction evidence="1">
        <text>N-acetyl-L-glutamate + ATP = N-acetyl-L-glutamyl 5-phosphate + ADP</text>
        <dbReference type="Rhea" id="RHEA:14629"/>
        <dbReference type="ChEBI" id="CHEBI:30616"/>
        <dbReference type="ChEBI" id="CHEBI:44337"/>
        <dbReference type="ChEBI" id="CHEBI:57936"/>
        <dbReference type="ChEBI" id="CHEBI:456216"/>
        <dbReference type="EC" id="2.7.2.8"/>
    </reaction>
</comment>
<comment type="pathway">
    <text evidence="1">Amino-acid biosynthesis; L-arginine biosynthesis; N(2)-acetyl-L-ornithine from L-glutamate: step 2/4.</text>
</comment>
<comment type="subcellular location">
    <subcellularLocation>
        <location evidence="1">Cytoplasm</location>
    </subcellularLocation>
</comment>
<comment type="similarity">
    <text evidence="1">Belongs to the acetylglutamate kinase family. ArgB subfamily.</text>
</comment>
<reference key="1">
    <citation type="journal article" date="2010" name="Genome Biol. Evol.">
        <title>Continuing evolution of Burkholderia mallei through genome reduction and large-scale rearrangements.</title>
        <authorList>
            <person name="Losada L."/>
            <person name="Ronning C.M."/>
            <person name="DeShazer D."/>
            <person name="Woods D."/>
            <person name="Fedorova N."/>
            <person name="Kim H.S."/>
            <person name="Shabalina S.A."/>
            <person name="Pearson T.R."/>
            <person name="Brinkac L."/>
            <person name="Tan P."/>
            <person name="Nandi T."/>
            <person name="Crabtree J."/>
            <person name="Badger J."/>
            <person name="Beckstrom-Sternberg S."/>
            <person name="Saqib M."/>
            <person name="Schutzer S.E."/>
            <person name="Keim P."/>
            <person name="Nierman W.C."/>
        </authorList>
    </citation>
    <scope>NUCLEOTIDE SEQUENCE [LARGE SCALE GENOMIC DNA]</scope>
    <source>
        <strain>NCTC 10247</strain>
    </source>
</reference>
<sequence>MSEPIDLSQISPALKAEILAEALPYIRRYHGKTVVIKYGGNAMTEERLKQGFARDVILLKLVGINPVIVHGGGPQIDQALKKIGKQGTFIQGMRVTDEETMEVVEWVLGGEVQQDIVTLINHFGGHAVGLTGKDGGLIHARKLMMPDRDNPGEYVDIGQVGEVEAINPAVVKALQDDAFIPVISPIGFGEDGLSYNINADLVAGKLATVLNAEKLVMMTNIPGVMDKEGNLLTDLSAREIDALFEDGTISGGMLPKISSALDAAKSGVKSVHIVDGRIEHSVLLEILTEQPFGTMIRSH</sequence>
<evidence type="ECO:0000255" key="1">
    <source>
        <dbReference type="HAMAP-Rule" id="MF_00082"/>
    </source>
</evidence>
<keyword id="KW-0028">Amino-acid biosynthesis</keyword>
<keyword id="KW-0055">Arginine biosynthesis</keyword>
<keyword id="KW-0067">ATP-binding</keyword>
<keyword id="KW-0963">Cytoplasm</keyword>
<keyword id="KW-0418">Kinase</keyword>
<keyword id="KW-0547">Nucleotide-binding</keyword>
<keyword id="KW-0808">Transferase</keyword>
<dbReference type="EC" id="2.7.2.8" evidence="1"/>
<dbReference type="EMBL" id="CP000548">
    <property type="protein sequence ID" value="ABO06137.1"/>
    <property type="molecule type" value="Genomic_DNA"/>
</dbReference>
<dbReference type="RefSeq" id="WP_004200214.1">
    <property type="nucleotide sequence ID" value="NZ_CP007802.1"/>
</dbReference>
<dbReference type="SMR" id="A3MRR8"/>
<dbReference type="GeneID" id="93058708"/>
<dbReference type="KEGG" id="bmaz:BM44_3081"/>
<dbReference type="KEGG" id="bmn:BMA10247_3438"/>
<dbReference type="PATRIC" id="fig|320389.8.peg.3450"/>
<dbReference type="UniPathway" id="UPA00068">
    <property type="reaction ID" value="UER00107"/>
</dbReference>
<dbReference type="GO" id="GO:0005737">
    <property type="term" value="C:cytoplasm"/>
    <property type="evidence" value="ECO:0007669"/>
    <property type="project" value="UniProtKB-SubCell"/>
</dbReference>
<dbReference type="GO" id="GO:0003991">
    <property type="term" value="F:acetylglutamate kinase activity"/>
    <property type="evidence" value="ECO:0007669"/>
    <property type="project" value="UniProtKB-UniRule"/>
</dbReference>
<dbReference type="GO" id="GO:0005524">
    <property type="term" value="F:ATP binding"/>
    <property type="evidence" value="ECO:0007669"/>
    <property type="project" value="UniProtKB-UniRule"/>
</dbReference>
<dbReference type="GO" id="GO:0042450">
    <property type="term" value="P:arginine biosynthetic process via ornithine"/>
    <property type="evidence" value="ECO:0007669"/>
    <property type="project" value="UniProtKB-UniRule"/>
</dbReference>
<dbReference type="GO" id="GO:0006526">
    <property type="term" value="P:L-arginine biosynthetic process"/>
    <property type="evidence" value="ECO:0007669"/>
    <property type="project" value="UniProtKB-UniPathway"/>
</dbReference>
<dbReference type="CDD" id="cd04250">
    <property type="entry name" value="AAK_NAGK-C"/>
    <property type="match status" value="1"/>
</dbReference>
<dbReference type="FunFam" id="3.40.1160.10:FF:000004">
    <property type="entry name" value="Acetylglutamate kinase"/>
    <property type="match status" value="1"/>
</dbReference>
<dbReference type="Gene3D" id="3.40.1160.10">
    <property type="entry name" value="Acetylglutamate kinase-like"/>
    <property type="match status" value="1"/>
</dbReference>
<dbReference type="HAMAP" id="MF_00082">
    <property type="entry name" value="ArgB"/>
    <property type="match status" value="1"/>
</dbReference>
<dbReference type="InterPro" id="IPR036393">
    <property type="entry name" value="AceGlu_kinase-like_sf"/>
</dbReference>
<dbReference type="InterPro" id="IPR004662">
    <property type="entry name" value="AcgluKinase_fam"/>
</dbReference>
<dbReference type="InterPro" id="IPR037528">
    <property type="entry name" value="ArgB"/>
</dbReference>
<dbReference type="InterPro" id="IPR001048">
    <property type="entry name" value="Asp/Glu/Uridylate_kinase"/>
</dbReference>
<dbReference type="InterPro" id="IPR041727">
    <property type="entry name" value="NAGK-C"/>
</dbReference>
<dbReference type="NCBIfam" id="TIGR00761">
    <property type="entry name" value="argB"/>
    <property type="match status" value="1"/>
</dbReference>
<dbReference type="PANTHER" id="PTHR23342">
    <property type="entry name" value="N-ACETYLGLUTAMATE SYNTHASE"/>
    <property type="match status" value="1"/>
</dbReference>
<dbReference type="PANTHER" id="PTHR23342:SF0">
    <property type="entry name" value="N-ACETYLGLUTAMATE SYNTHASE, MITOCHONDRIAL"/>
    <property type="match status" value="1"/>
</dbReference>
<dbReference type="Pfam" id="PF00696">
    <property type="entry name" value="AA_kinase"/>
    <property type="match status" value="1"/>
</dbReference>
<dbReference type="PIRSF" id="PIRSF000728">
    <property type="entry name" value="NAGK"/>
    <property type="match status" value="1"/>
</dbReference>
<dbReference type="SUPFAM" id="SSF53633">
    <property type="entry name" value="Carbamate kinase-like"/>
    <property type="match status" value="1"/>
</dbReference>
<feature type="chain" id="PRO_1000010489" description="Acetylglutamate kinase">
    <location>
        <begin position="1"/>
        <end position="299"/>
    </location>
</feature>
<feature type="binding site" evidence="1">
    <location>
        <begin position="72"/>
        <end position="73"/>
    </location>
    <ligand>
        <name>substrate</name>
    </ligand>
</feature>
<feature type="binding site" evidence="1">
    <location>
        <position position="94"/>
    </location>
    <ligand>
        <name>substrate</name>
    </ligand>
</feature>
<feature type="binding site" evidence="1">
    <location>
        <position position="196"/>
    </location>
    <ligand>
        <name>substrate</name>
    </ligand>
</feature>
<feature type="site" description="Transition state stabilizer" evidence="1">
    <location>
        <position position="37"/>
    </location>
</feature>
<feature type="site" description="Transition state stabilizer" evidence="1">
    <location>
        <position position="256"/>
    </location>
</feature>
<proteinExistence type="inferred from homology"/>
<gene>
    <name evidence="1" type="primary">argB</name>
    <name type="ordered locus">BMA10247_3438</name>
</gene>
<accession>A3MRR8</accession>
<protein>
    <recommendedName>
        <fullName evidence="1">Acetylglutamate kinase</fullName>
        <ecNumber evidence="1">2.7.2.8</ecNumber>
    </recommendedName>
    <alternativeName>
        <fullName evidence="1">N-acetyl-L-glutamate 5-phosphotransferase</fullName>
    </alternativeName>
    <alternativeName>
        <fullName evidence="1">NAG kinase</fullName>
        <shortName evidence="1">NAGK</shortName>
    </alternativeName>
</protein>